<comment type="function">
    <text evidence="1">Component of the nascent polypeptide-associated complex (NAC), a dynamic component of the ribosomal exit tunnel, protecting the emerging polypeptides from interaction with other cytoplasmic proteins to ensure appropriate nascent protein targeting. The NAC complex also promotes mitochondrial protein import by enhancing productive ribosome interactions with the outer mitochondrial membrane and blocks the inappropriate interaction of ribosomes translating non-secretory nascent polypeptides with translocation sites in the membrane of the endoplasmic reticulum. EGD2 may also be involved in transcription regulation (By similarity).</text>
</comment>
<comment type="subunit">
    <text evidence="1">Part of the nascent polypeptide-associated complex (NAC), consisting of EGD2 and EGD1. NAC associates with ribosomes via EGD1 (By similarity).</text>
</comment>
<comment type="subcellular location">
    <subcellularLocation>
        <location evidence="1">Cytoplasm</location>
    </subcellularLocation>
    <subcellularLocation>
        <location evidence="1">Nucleus</location>
    </subcellularLocation>
    <text evidence="1">Predominantly cytoplasmic, may also transiently localize to the nucleus.</text>
</comment>
<comment type="similarity">
    <text evidence="4">Belongs to the NAC-alpha family.</text>
</comment>
<proteinExistence type="inferred from homology"/>
<protein>
    <recommendedName>
        <fullName>Nascent polypeptide-associated complex subunit alpha</fullName>
        <shortName>NAC-alpha</shortName>
    </recommendedName>
    <alternativeName>
        <fullName>Alpha-NAC</fullName>
    </alternativeName>
</protein>
<organism>
    <name type="scientific">Candida albicans (strain SC5314 / ATCC MYA-2876)</name>
    <name type="common">Yeast</name>
    <dbReference type="NCBI Taxonomy" id="237561"/>
    <lineage>
        <taxon>Eukaryota</taxon>
        <taxon>Fungi</taxon>
        <taxon>Dikarya</taxon>
        <taxon>Ascomycota</taxon>
        <taxon>Saccharomycotina</taxon>
        <taxon>Pichiomycetes</taxon>
        <taxon>Debaryomycetaceae</taxon>
        <taxon>Candida/Lodderomyces clade</taxon>
        <taxon>Candida</taxon>
    </lineage>
</organism>
<keyword id="KW-0963">Cytoplasm</keyword>
<keyword id="KW-0539">Nucleus</keyword>
<keyword id="KW-0653">Protein transport</keyword>
<keyword id="KW-1185">Reference proteome</keyword>
<keyword id="KW-0813">Transport</keyword>
<gene>
    <name type="primary">EGD2</name>
    <name type="ordered locus">CAALFM_C304140CA</name>
    <name type="ORF">CaO19.13280</name>
    <name type="ORF">CaO19.5858</name>
</gene>
<accession>Q5ANP2</accession>
<accession>A0A1D8PJU3</accession>
<feature type="chain" id="PRO_0000273483" description="Nascent polypeptide-associated complex subunit alpha">
    <location>
        <begin position="1"/>
        <end position="178"/>
    </location>
</feature>
<feature type="domain" description="NAC-A/B" evidence="2">
    <location>
        <begin position="16"/>
        <end position="80"/>
    </location>
</feature>
<feature type="domain" description="UBA">
    <location>
        <begin position="140"/>
        <end position="178"/>
    </location>
</feature>
<feature type="region of interest" description="Disordered" evidence="3">
    <location>
        <begin position="82"/>
        <end position="145"/>
    </location>
</feature>
<feature type="compositionally biased region" description="Low complexity" evidence="3">
    <location>
        <begin position="82"/>
        <end position="100"/>
    </location>
</feature>
<feature type="compositionally biased region" description="Basic and acidic residues" evidence="3">
    <location>
        <begin position="101"/>
        <end position="126"/>
    </location>
</feature>
<feature type="compositionally biased region" description="Acidic residues" evidence="3">
    <location>
        <begin position="127"/>
        <end position="139"/>
    </location>
</feature>
<name>NACA_CANAL</name>
<reference key="1">
    <citation type="journal article" date="2004" name="Proc. Natl. Acad. Sci. U.S.A.">
        <title>The diploid genome sequence of Candida albicans.</title>
        <authorList>
            <person name="Jones T."/>
            <person name="Federspiel N.A."/>
            <person name="Chibana H."/>
            <person name="Dungan J."/>
            <person name="Kalman S."/>
            <person name="Magee B.B."/>
            <person name="Newport G."/>
            <person name="Thorstenson Y.R."/>
            <person name="Agabian N."/>
            <person name="Magee P.T."/>
            <person name="Davis R.W."/>
            <person name="Scherer S."/>
        </authorList>
    </citation>
    <scope>NUCLEOTIDE SEQUENCE [LARGE SCALE GENOMIC DNA]</scope>
    <source>
        <strain>SC5314 / ATCC MYA-2876</strain>
    </source>
</reference>
<reference key="2">
    <citation type="journal article" date="2007" name="Genome Biol.">
        <title>Assembly of the Candida albicans genome into sixteen supercontigs aligned on the eight chromosomes.</title>
        <authorList>
            <person name="van het Hoog M."/>
            <person name="Rast T.J."/>
            <person name="Martchenko M."/>
            <person name="Grindle S."/>
            <person name="Dignard D."/>
            <person name="Hogues H."/>
            <person name="Cuomo C."/>
            <person name="Berriman M."/>
            <person name="Scherer S."/>
            <person name="Magee B.B."/>
            <person name="Whiteway M."/>
            <person name="Chibana H."/>
            <person name="Nantel A."/>
            <person name="Magee P.T."/>
        </authorList>
    </citation>
    <scope>GENOME REANNOTATION</scope>
    <source>
        <strain>SC5314 / ATCC MYA-2876</strain>
    </source>
</reference>
<reference key="3">
    <citation type="journal article" date="2013" name="Genome Biol.">
        <title>Assembly of a phased diploid Candida albicans genome facilitates allele-specific measurements and provides a simple model for repeat and indel structure.</title>
        <authorList>
            <person name="Muzzey D."/>
            <person name="Schwartz K."/>
            <person name="Weissman J.S."/>
            <person name="Sherlock G."/>
        </authorList>
    </citation>
    <scope>NUCLEOTIDE SEQUENCE [LARGE SCALE GENOMIC DNA]</scope>
    <scope>GENOME REANNOTATION</scope>
    <source>
        <strain>SC5314 / ATCC MYA-2876</strain>
    </source>
</reference>
<evidence type="ECO:0000250" key="1"/>
<evidence type="ECO:0000255" key="2">
    <source>
        <dbReference type="PROSITE-ProRule" id="PRU00507"/>
    </source>
</evidence>
<evidence type="ECO:0000256" key="3">
    <source>
        <dbReference type="SAM" id="MobiDB-lite"/>
    </source>
</evidence>
<evidence type="ECO:0000305" key="4"/>
<dbReference type="EMBL" id="CP017625">
    <property type="protein sequence ID" value="AOW28435.1"/>
    <property type="molecule type" value="Genomic_DNA"/>
</dbReference>
<dbReference type="RefSeq" id="XP_723074.1">
    <property type="nucleotide sequence ID" value="XM_717981.1"/>
</dbReference>
<dbReference type="SMR" id="Q5ANP2"/>
<dbReference type="FunCoup" id="Q5ANP2">
    <property type="interactions" value="589"/>
</dbReference>
<dbReference type="STRING" id="237561.Q5ANP2"/>
<dbReference type="EnsemblFungi" id="C3_04140C_A-T">
    <property type="protein sequence ID" value="C3_04140C_A-T-p1"/>
    <property type="gene ID" value="C3_04140C_A"/>
</dbReference>
<dbReference type="GeneID" id="3635284"/>
<dbReference type="KEGG" id="cal:CAALFM_C304140CA"/>
<dbReference type="CGD" id="CAL0000185584">
    <property type="gene designation" value="EGD2"/>
</dbReference>
<dbReference type="VEuPathDB" id="FungiDB:C3_04140C_A"/>
<dbReference type="eggNOG" id="KOG2239">
    <property type="taxonomic scope" value="Eukaryota"/>
</dbReference>
<dbReference type="HOGENOM" id="CLU_057806_2_1_1"/>
<dbReference type="InParanoid" id="Q5ANP2"/>
<dbReference type="OMA" id="SQKMIFA"/>
<dbReference type="OrthoDB" id="3169036at2759"/>
<dbReference type="PRO" id="PR:Q5ANP2"/>
<dbReference type="Proteomes" id="UP000000559">
    <property type="component" value="Chromosome 3"/>
</dbReference>
<dbReference type="GO" id="GO:0009986">
    <property type="term" value="C:cell surface"/>
    <property type="evidence" value="ECO:0000314"/>
    <property type="project" value="CGD"/>
</dbReference>
<dbReference type="GO" id="GO:0005737">
    <property type="term" value="C:cytoplasm"/>
    <property type="evidence" value="ECO:0000318"/>
    <property type="project" value="GO_Central"/>
</dbReference>
<dbReference type="GO" id="GO:0005854">
    <property type="term" value="C:nascent polypeptide-associated complex"/>
    <property type="evidence" value="ECO:0007669"/>
    <property type="project" value="EnsemblFungi"/>
</dbReference>
<dbReference type="GO" id="GO:0005634">
    <property type="term" value="C:nucleus"/>
    <property type="evidence" value="ECO:0007669"/>
    <property type="project" value="UniProtKB-SubCell"/>
</dbReference>
<dbReference type="GO" id="GO:0070300">
    <property type="term" value="F:phosphatidic acid binding"/>
    <property type="evidence" value="ECO:0007669"/>
    <property type="project" value="EnsemblFungi"/>
</dbReference>
<dbReference type="GO" id="GO:0080025">
    <property type="term" value="F:phosphatidylinositol-3,5-bisphosphate binding"/>
    <property type="evidence" value="ECO:0007669"/>
    <property type="project" value="EnsemblFungi"/>
</dbReference>
<dbReference type="GO" id="GO:0032266">
    <property type="term" value="F:phosphatidylinositol-3-phosphate binding"/>
    <property type="evidence" value="ECO:0007669"/>
    <property type="project" value="EnsemblFungi"/>
</dbReference>
<dbReference type="GO" id="GO:0070273">
    <property type="term" value="F:phosphatidylinositol-4-phosphate binding"/>
    <property type="evidence" value="ECO:0007669"/>
    <property type="project" value="EnsemblFungi"/>
</dbReference>
<dbReference type="GO" id="GO:0051082">
    <property type="term" value="F:unfolded protein binding"/>
    <property type="evidence" value="ECO:0000318"/>
    <property type="project" value="GO_Central"/>
</dbReference>
<dbReference type="GO" id="GO:0006613">
    <property type="term" value="P:cotranslational protein targeting to membrane"/>
    <property type="evidence" value="ECO:0007669"/>
    <property type="project" value="EnsemblFungi"/>
</dbReference>
<dbReference type="GO" id="GO:0006612">
    <property type="term" value="P:protein targeting to membrane"/>
    <property type="evidence" value="ECO:0000318"/>
    <property type="project" value="GO_Central"/>
</dbReference>
<dbReference type="GO" id="GO:0015031">
    <property type="term" value="P:protein transport"/>
    <property type="evidence" value="ECO:0007669"/>
    <property type="project" value="UniProtKB-KW"/>
</dbReference>
<dbReference type="CDD" id="cd22054">
    <property type="entry name" value="NAC_NACA"/>
    <property type="match status" value="1"/>
</dbReference>
<dbReference type="CDD" id="cd14358">
    <property type="entry name" value="UBA_NAC_euk"/>
    <property type="match status" value="1"/>
</dbReference>
<dbReference type="FunFam" id="2.20.70.30:FF:000002">
    <property type="entry name" value="Nascent polypeptide-associated complex (NAC), alpha subunit"/>
    <property type="match status" value="1"/>
</dbReference>
<dbReference type="FunFam" id="1.10.8.10:FF:000006">
    <property type="entry name" value="Putative nascent polypeptide-associated complex subunit alpha"/>
    <property type="match status" value="1"/>
</dbReference>
<dbReference type="Gene3D" id="1.10.8.10">
    <property type="entry name" value="DNA helicase RuvA subunit, C-terminal domain"/>
    <property type="match status" value="1"/>
</dbReference>
<dbReference type="Gene3D" id="2.20.70.30">
    <property type="entry name" value="Nascent polypeptide-associated complex domain"/>
    <property type="match status" value="1"/>
</dbReference>
<dbReference type="InterPro" id="IPR016641">
    <property type="entry name" value="EGD2/NACA0like"/>
</dbReference>
<dbReference type="InterPro" id="IPR044034">
    <property type="entry name" value="NAC-like_UBA"/>
</dbReference>
<dbReference type="InterPro" id="IPR038187">
    <property type="entry name" value="NAC_A/B_dom_sf"/>
</dbReference>
<dbReference type="InterPro" id="IPR002715">
    <property type="entry name" value="Nas_poly-pep-assoc_cplx_dom"/>
</dbReference>
<dbReference type="PANTHER" id="PTHR21713">
    <property type="entry name" value="NASCENT POLYPEPTIDE ASSOCIATED COMPLEX ALPHA SUBUNIT-RELATED"/>
    <property type="match status" value="1"/>
</dbReference>
<dbReference type="Pfam" id="PF01849">
    <property type="entry name" value="NAC"/>
    <property type="match status" value="1"/>
</dbReference>
<dbReference type="Pfam" id="PF19026">
    <property type="entry name" value="UBA_HYPK"/>
    <property type="match status" value="1"/>
</dbReference>
<dbReference type="PIRSF" id="PIRSF015901">
    <property type="entry name" value="NAC_alpha"/>
    <property type="match status" value="1"/>
</dbReference>
<dbReference type="SMART" id="SM01407">
    <property type="entry name" value="NAC"/>
    <property type="match status" value="1"/>
</dbReference>
<dbReference type="PROSITE" id="PS51151">
    <property type="entry name" value="NAC_AB"/>
    <property type="match status" value="1"/>
</dbReference>
<sequence>MSIEEIPQGADVNVIPKNEKKARELIKKLNLKQIKGISRVTFKQRGNLIYAIDSPDVYRSAAGTYVVFGEAKVDDMNQRIAEAQAQQAQQEALQKAAADAGKTEDKSPEAITADLEKASLGDKKAEDEEEDEGEIDETGLDPKDIEIVVEQTQVSRAKAVKALRNHDGDMVNAIMDLS</sequence>